<sequence length="381" mass="43167">MAMNIRKIHPLLKIMNQTLIDLPAPSNISIWWNFGSLLGLCLVIQIVTGLFLAMHYTADITMAFSSVTHICRDVNYGWLIRNIHANGASLFFVCIYFHIARGLYYGSYLYKETWNIGVILLFLLMATAFVGYVLPWGQMSFWGATVITNLLSAFPYIGDTLVQWIWGGFSVDNATLTRFFAFHFLLPFLITALMIIHILFLHETGSNNPMGLNSDMDKISFHPYFIYKDALGFLSLLILLGILALFLPNLLGDTENFIPANPLVTPPHIKPEWYFLFAYAILRSIPNKLGGVLALLFSILILMLVPFLHTSKQRSSTFRPLTQVFFWILVANMLVLTWIGGQPVEQPFILIGQIASISYFSLFLIAIPLAGWWENKILGLN</sequence>
<reference key="1">
    <citation type="journal article" date="1992" name="Nature">
        <title>Rates of mitochondrial DNA evolution in sharks are slow compared with mammals.</title>
        <authorList>
            <person name="Martin A.P."/>
            <person name="Naylor G.J.P."/>
            <person name="Palumbi S.R."/>
        </authorList>
    </citation>
    <scope>NUCLEOTIDE SEQUENCE [GENOMIC DNA]</scope>
</reference>
<proteinExistence type="inferred from homology"/>
<organism>
    <name type="scientific">Carcharodon carcharias</name>
    <name type="common">Great white shark</name>
    <name type="synonym">Squalus carcharias</name>
    <dbReference type="NCBI Taxonomy" id="13397"/>
    <lineage>
        <taxon>Eukaryota</taxon>
        <taxon>Metazoa</taxon>
        <taxon>Chordata</taxon>
        <taxon>Craniata</taxon>
        <taxon>Vertebrata</taxon>
        <taxon>Chondrichthyes</taxon>
        <taxon>Elasmobranchii</taxon>
        <taxon>Galeomorphii</taxon>
        <taxon>Galeoidea</taxon>
        <taxon>Lamniformes</taxon>
        <taxon>Alopiidae</taxon>
        <taxon>Carcharodon</taxon>
    </lineage>
</organism>
<dbReference type="EMBL" id="L08031">
    <property type="protein sequence ID" value="AAB00327.1"/>
    <property type="molecule type" value="Genomic_DNA"/>
</dbReference>
<dbReference type="SMR" id="P34865"/>
<dbReference type="GO" id="GO:0005743">
    <property type="term" value="C:mitochondrial inner membrane"/>
    <property type="evidence" value="ECO:0007669"/>
    <property type="project" value="UniProtKB-SubCell"/>
</dbReference>
<dbReference type="GO" id="GO:0045275">
    <property type="term" value="C:respiratory chain complex III"/>
    <property type="evidence" value="ECO:0007669"/>
    <property type="project" value="InterPro"/>
</dbReference>
<dbReference type="GO" id="GO:0046872">
    <property type="term" value="F:metal ion binding"/>
    <property type="evidence" value="ECO:0007669"/>
    <property type="project" value="UniProtKB-KW"/>
</dbReference>
<dbReference type="GO" id="GO:0008121">
    <property type="term" value="F:ubiquinol-cytochrome-c reductase activity"/>
    <property type="evidence" value="ECO:0007669"/>
    <property type="project" value="InterPro"/>
</dbReference>
<dbReference type="GO" id="GO:0006122">
    <property type="term" value="P:mitochondrial electron transport, ubiquinol to cytochrome c"/>
    <property type="evidence" value="ECO:0007669"/>
    <property type="project" value="TreeGrafter"/>
</dbReference>
<dbReference type="CDD" id="cd00290">
    <property type="entry name" value="cytochrome_b_C"/>
    <property type="match status" value="1"/>
</dbReference>
<dbReference type="CDD" id="cd00284">
    <property type="entry name" value="Cytochrome_b_N"/>
    <property type="match status" value="1"/>
</dbReference>
<dbReference type="FunFam" id="1.20.810.10:FF:000002">
    <property type="entry name" value="Cytochrome b"/>
    <property type="match status" value="1"/>
</dbReference>
<dbReference type="Gene3D" id="1.20.810.10">
    <property type="entry name" value="Cytochrome Bc1 Complex, Chain C"/>
    <property type="match status" value="1"/>
</dbReference>
<dbReference type="InterPro" id="IPR005798">
    <property type="entry name" value="Cyt_b/b6_C"/>
</dbReference>
<dbReference type="InterPro" id="IPR036150">
    <property type="entry name" value="Cyt_b/b6_C_sf"/>
</dbReference>
<dbReference type="InterPro" id="IPR005797">
    <property type="entry name" value="Cyt_b/b6_N"/>
</dbReference>
<dbReference type="InterPro" id="IPR027387">
    <property type="entry name" value="Cytb/b6-like_sf"/>
</dbReference>
<dbReference type="InterPro" id="IPR030689">
    <property type="entry name" value="Cytochrome_b"/>
</dbReference>
<dbReference type="InterPro" id="IPR048260">
    <property type="entry name" value="Cytochrome_b_C_euk/bac"/>
</dbReference>
<dbReference type="InterPro" id="IPR048259">
    <property type="entry name" value="Cytochrome_b_N_euk/bac"/>
</dbReference>
<dbReference type="InterPro" id="IPR016174">
    <property type="entry name" value="Di-haem_cyt_TM"/>
</dbReference>
<dbReference type="PANTHER" id="PTHR19271">
    <property type="entry name" value="CYTOCHROME B"/>
    <property type="match status" value="1"/>
</dbReference>
<dbReference type="PANTHER" id="PTHR19271:SF16">
    <property type="entry name" value="CYTOCHROME B"/>
    <property type="match status" value="1"/>
</dbReference>
<dbReference type="Pfam" id="PF00032">
    <property type="entry name" value="Cytochrom_B_C"/>
    <property type="match status" value="1"/>
</dbReference>
<dbReference type="Pfam" id="PF00033">
    <property type="entry name" value="Cytochrome_B"/>
    <property type="match status" value="1"/>
</dbReference>
<dbReference type="PIRSF" id="PIRSF038885">
    <property type="entry name" value="COB"/>
    <property type="match status" value="1"/>
</dbReference>
<dbReference type="SUPFAM" id="SSF81648">
    <property type="entry name" value="a domain/subunit of cytochrome bc1 complex (Ubiquinol-cytochrome c reductase)"/>
    <property type="match status" value="1"/>
</dbReference>
<dbReference type="SUPFAM" id="SSF81342">
    <property type="entry name" value="Transmembrane di-heme cytochromes"/>
    <property type="match status" value="1"/>
</dbReference>
<dbReference type="PROSITE" id="PS51003">
    <property type="entry name" value="CYTB_CTER"/>
    <property type="match status" value="1"/>
</dbReference>
<dbReference type="PROSITE" id="PS51002">
    <property type="entry name" value="CYTB_NTER"/>
    <property type="match status" value="1"/>
</dbReference>
<geneLocation type="mitochondrion"/>
<name>CYB_CARCH</name>
<accession>P34865</accession>
<gene>
    <name type="primary">mt-cyb</name>
    <name type="synonym">cob</name>
    <name type="synonym">cytb</name>
    <name type="synonym">mtcyb</name>
</gene>
<comment type="function">
    <text evidence="2">Component of the ubiquinol-cytochrome c reductase complex (complex III or cytochrome b-c1 complex) that is part of the mitochondrial respiratory chain. The b-c1 complex mediates electron transfer from ubiquinol to cytochrome c. Contributes to the generation of a proton gradient across the mitochondrial membrane that is then used for ATP synthesis.</text>
</comment>
<comment type="cofactor">
    <cofactor evidence="2">
        <name>heme b</name>
        <dbReference type="ChEBI" id="CHEBI:60344"/>
    </cofactor>
    <text evidence="2">Binds 2 heme b groups non-covalently.</text>
</comment>
<comment type="subunit">
    <text evidence="2">The cytochrome bc1 complex contains 3 respiratory subunits (MT-CYB, CYC1 and UQCRFS1), 2 core proteins (UQCRC1 and UQCRC2) and probably 6 low-molecular weight proteins.</text>
</comment>
<comment type="subcellular location">
    <subcellularLocation>
        <location evidence="2">Mitochondrion inner membrane</location>
        <topology evidence="2">Multi-pass membrane protein</topology>
    </subcellularLocation>
</comment>
<comment type="miscellaneous">
    <text evidence="1">Heme 1 (or BL or b562) is low-potential and absorbs at about 562 nm, and heme 2 (or BH or b566) is high-potential and absorbs at about 566 nm.</text>
</comment>
<comment type="similarity">
    <text evidence="3 4">Belongs to the cytochrome b family.</text>
</comment>
<comment type="caution">
    <text evidence="2">The full-length protein contains only eight transmembrane helices, not nine as predicted by bioinformatics tools.</text>
</comment>
<feature type="chain" id="PRO_0000060734" description="Cytochrome b">
    <location>
        <begin position="1"/>
        <end position="381"/>
    </location>
</feature>
<feature type="transmembrane region" description="Helical" evidence="2">
    <location>
        <begin position="34"/>
        <end position="54"/>
    </location>
</feature>
<feature type="transmembrane region" description="Helical" evidence="2">
    <location>
        <begin position="78"/>
        <end position="99"/>
    </location>
</feature>
<feature type="transmembrane region" description="Helical" evidence="2">
    <location>
        <begin position="114"/>
        <end position="134"/>
    </location>
</feature>
<feature type="transmembrane region" description="Helical" evidence="2">
    <location>
        <begin position="179"/>
        <end position="199"/>
    </location>
</feature>
<feature type="transmembrane region" description="Helical" evidence="2">
    <location>
        <begin position="227"/>
        <end position="247"/>
    </location>
</feature>
<feature type="transmembrane region" description="Helical" evidence="2">
    <location>
        <begin position="289"/>
        <end position="309"/>
    </location>
</feature>
<feature type="transmembrane region" description="Helical" evidence="2">
    <location>
        <begin position="321"/>
        <end position="341"/>
    </location>
</feature>
<feature type="transmembrane region" description="Helical" evidence="2">
    <location>
        <begin position="348"/>
        <end position="368"/>
    </location>
</feature>
<feature type="binding site" description="axial binding residue" evidence="2">
    <location>
        <position position="84"/>
    </location>
    <ligand>
        <name>heme b</name>
        <dbReference type="ChEBI" id="CHEBI:60344"/>
        <label>b562</label>
    </ligand>
    <ligandPart>
        <name>Fe</name>
        <dbReference type="ChEBI" id="CHEBI:18248"/>
    </ligandPart>
</feature>
<feature type="binding site" description="axial binding residue" evidence="2">
    <location>
        <position position="98"/>
    </location>
    <ligand>
        <name>heme b</name>
        <dbReference type="ChEBI" id="CHEBI:60344"/>
        <label>b566</label>
    </ligand>
    <ligandPart>
        <name>Fe</name>
        <dbReference type="ChEBI" id="CHEBI:18248"/>
    </ligandPart>
</feature>
<feature type="binding site" description="axial binding residue" evidence="2">
    <location>
        <position position="183"/>
    </location>
    <ligand>
        <name>heme b</name>
        <dbReference type="ChEBI" id="CHEBI:60344"/>
        <label>b562</label>
    </ligand>
    <ligandPart>
        <name>Fe</name>
        <dbReference type="ChEBI" id="CHEBI:18248"/>
    </ligandPart>
</feature>
<feature type="binding site" description="axial binding residue" evidence="2">
    <location>
        <position position="197"/>
    </location>
    <ligand>
        <name>heme b</name>
        <dbReference type="ChEBI" id="CHEBI:60344"/>
        <label>b566</label>
    </ligand>
    <ligandPart>
        <name>Fe</name>
        <dbReference type="ChEBI" id="CHEBI:18248"/>
    </ligandPart>
</feature>
<feature type="binding site" evidence="2">
    <location>
        <position position="202"/>
    </location>
    <ligand>
        <name>a ubiquinone</name>
        <dbReference type="ChEBI" id="CHEBI:16389"/>
    </ligand>
</feature>
<protein>
    <recommendedName>
        <fullName>Cytochrome b</fullName>
    </recommendedName>
    <alternativeName>
        <fullName>Complex III subunit 3</fullName>
    </alternativeName>
    <alternativeName>
        <fullName>Complex III subunit III</fullName>
    </alternativeName>
    <alternativeName>
        <fullName>Cytochrome b-c1 complex subunit 3</fullName>
    </alternativeName>
    <alternativeName>
        <fullName>Ubiquinol-cytochrome-c reductase complex cytochrome b subunit</fullName>
    </alternativeName>
</protein>
<keyword id="KW-0249">Electron transport</keyword>
<keyword id="KW-0349">Heme</keyword>
<keyword id="KW-0408">Iron</keyword>
<keyword id="KW-0472">Membrane</keyword>
<keyword id="KW-0479">Metal-binding</keyword>
<keyword id="KW-0496">Mitochondrion</keyword>
<keyword id="KW-0999">Mitochondrion inner membrane</keyword>
<keyword id="KW-0679">Respiratory chain</keyword>
<keyword id="KW-0812">Transmembrane</keyword>
<keyword id="KW-1133">Transmembrane helix</keyword>
<keyword id="KW-0813">Transport</keyword>
<keyword id="KW-0830">Ubiquinone</keyword>
<evidence type="ECO:0000250" key="1"/>
<evidence type="ECO:0000250" key="2">
    <source>
        <dbReference type="UniProtKB" id="P00157"/>
    </source>
</evidence>
<evidence type="ECO:0000255" key="3">
    <source>
        <dbReference type="PROSITE-ProRule" id="PRU00967"/>
    </source>
</evidence>
<evidence type="ECO:0000255" key="4">
    <source>
        <dbReference type="PROSITE-ProRule" id="PRU00968"/>
    </source>
</evidence>